<feature type="chain" id="PRO_0000151386" description="Ketol-acid reductoisomerase (NADP(+))">
    <location>
        <begin position="1"/>
        <end position="350"/>
    </location>
</feature>
<feature type="domain" description="KARI N-terminal Rossmann" evidence="2">
    <location>
        <begin position="4"/>
        <end position="187"/>
    </location>
</feature>
<feature type="domain" description="KARI C-terminal knotted" evidence="3">
    <location>
        <begin position="188"/>
        <end position="333"/>
    </location>
</feature>
<feature type="active site" evidence="1">
    <location>
        <position position="113"/>
    </location>
</feature>
<feature type="binding site" evidence="1">
    <location>
        <begin position="30"/>
        <end position="33"/>
    </location>
    <ligand>
        <name>NADP(+)</name>
        <dbReference type="ChEBI" id="CHEBI:58349"/>
    </ligand>
</feature>
<feature type="binding site" evidence="1">
    <location>
        <position position="53"/>
    </location>
    <ligand>
        <name>NADP(+)</name>
        <dbReference type="ChEBI" id="CHEBI:58349"/>
    </ligand>
</feature>
<feature type="binding site" evidence="1">
    <location>
        <position position="58"/>
    </location>
    <ligand>
        <name>NADP(+)</name>
        <dbReference type="ChEBI" id="CHEBI:58349"/>
    </ligand>
</feature>
<feature type="binding site" evidence="1">
    <location>
        <begin position="88"/>
        <end position="91"/>
    </location>
    <ligand>
        <name>NADP(+)</name>
        <dbReference type="ChEBI" id="CHEBI:58349"/>
    </ligand>
</feature>
<feature type="binding site" evidence="1">
    <location>
        <position position="139"/>
    </location>
    <ligand>
        <name>NADP(+)</name>
        <dbReference type="ChEBI" id="CHEBI:58349"/>
    </ligand>
</feature>
<feature type="binding site" evidence="1">
    <location>
        <position position="196"/>
    </location>
    <ligand>
        <name>Mg(2+)</name>
        <dbReference type="ChEBI" id="CHEBI:18420"/>
        <label>1</label>
    </ligand>
</feature>
<feature type="binding site" evidence="1">
    <location>
        <position position="196"/>
    </location>
    <ligand>
        <name>Mg(2+)</name>
        <dbReference type="ChEBI" id="CHEBI:18420"/>
        <label>2</label>
    </ligand>
</feature>
<feature type="binding site" evidence="1">
    <location>
        <position position="200"/>
    </location>
    <ligand>
        <name>Mg(2+)</name>
        <dbReference type="ChEBI" id="CHEBI:18420"/>
        <label>1</label>
    </ligand>
</feature>
<feature type="binding site" evidence="1">
    <location>
        <position position="232"/>
    </location>
    <ligand>
        <name>Mg(2+)</name>
        <dbReference type="ChEBI" id="CHEBI:18420"/>
        <label>2</label>
    </ligand>
</feature>
<feature type="binding site" evidence="1">
    <location>
        <position position="236"/>
    </location>
    <ligand>
        <name>Mg(2+)</name>
        <dbReference type="ChEBI" id="CHEBI:18420"/>
        <label>2</label>
    </ligand>
</feature>
<feature type="binding site" evidence="1">
    <location>
        <position position="257"/>
    </location>
    <ligand>
        <name>substrate</name>
    </ligand>
</feature>
<reference key="1">
    <citation type="journal article" date="2003" name="J. Bacteriol.">
        <title>Comparative analyses of the complete genome sequences of Pierce's disease and citrus variegated chlorosis strains of Xylella fastidiosa.</title>
        <authorList>
            <person name="Van Sluys M.A."/>
            <person name="de Oliveira M.C."/>
            <person name="Monteiro-Vitorello C.B."/>
            <person name="Miyaki C.Y."/>
            <person name="Furlan L.R."/>
            <person name="Camargo L.E.A."/>
            <person name="da Silva A.C.R."/>
            <person name="Moon D.H."/>
            <person name="Takita M.A."/>
            <person name="Lemos E.G.M."/>
            <person name="Machado M.A."/>
            <person name="Ferro M.I.T."/>
            <person name="da Silva F.R."/>
            <person name="Goldman M.H.S."/>
            <person name="Goldman G.H."/>
            <person name="Lemos M.V.F."/>
            <person name="El-Dorry H."/>
            <person name="Tsai S.M."/>
            <person name="Carrer H."/>
            <person name="Carraro D.M."/>
            <person name="de Oliveira R.C."/>
            <person name="Nunes L.R."/>
            <person name="Siqueira W.J."/>
            <person name="Coutinho L.L."/>
            <person name="Kimura E.T."/>
            <person name="Ferro E.S."/>
            <person name="Harakava R."/>
            <person name="Kuramae E.E."/>
            <person name="Marino C.L."/>
            <person name="Giglioti E."/>
            <person name="Abreu I.L."/>
            <person name="Alves L.M.C."/>
            <person name="do Amaral A.M."/>
            <person name="Baia G.S."/>
            <person name="Blanco S.R."/>
            <person name="Brito M.S."/>
            <person name="Cannavan F.S."/>
            <person name="Celestino A.V."/>
            <person name="da Cunha A.F."/>
            <person name="Fenille R.C."/>
            <person name="Ferro J.A."/>
            <person name="Formighieri E.F."/>
            <person name="Kishi L.T."/>
            <person name="Leoni S.G."/>
            <person name="Oliveira A.R."/>
            <person name="Rosa V.E. Jr."/>
            <person name="Sassaki F.T."/>
            <person name="Sena J.A.D."/>
            <person name="de Souza A.A."/>
            <person name="Truffi D."/>
            <person name="Tsukumo F."/>
            <person name="Yanai G.M."/>
            <person name="Zaros L.G."/>
            <person name="Civerolo E.L."/>
            <person name="Simpson A.J.G."/>
            <person name="Almeida N.F. Jr."/>
            <person name="Setubal J.C."/>
            <person name="Kitajima J.P."/>
        </authorList>
    </citation>
    <scope>NUCLEOTIDE SEQUENCE [LARGE SCALE GENOMIC DNA]</scope>
    <source>
        <strain>Temecula1 / ATCC 700964</strain>
    </source>
</reference>
<gene>
    <name evidence="1" type="primary">ilvC</name>
    <name type="ordered locus">PD_1043</name>
</gene>
<organism>
    <name type="scientific">Xylella fastidiosa (strain Temecula1 / ATCC 700964)</name>
    <dbReference type="NCBI Taxonomy" id="183190"/>
    <lineage>
        <taxon>Bacteria</taxon>
        <taxon>Pseudomonadati</taxon>
        <taxon>Pseudomonadota</taxon>
        <taxon>Gammaproteobacteria</taxon>
        <taxon>Lysobacterales</taxon>
        <taxon>Lysobacteraceae</taxon>
        <taxon>Xylella</taxon>
    </lineage>
</organism>
<keyword id="KW-0028">Amino-acid biosynthesis</keyword>
<keyword id="KW-0100">Branched-chain amino acid biosynthesis</keyword>
<keyword id="KW-0460">Magnesium</keyword>
<keyword id="KW-0479">Metal-binding</keyword>
<keyword id="KW-0521">NADP</keyword>
<keyword id="KW-0560">Oxidoreductase</keyword>
<keyword id="KW-1185">Reference proteome</keyword>
<name>ILVC_XYLFT</name>
<sequence>MVNVSITTDYSRMLFMRNTKSTLKIAIIGYGSQGRAHALNLRDSGFDIIVGLRPGGATEAKAQADGFTVQSPDQAAKHADLVAVLTPDMVQKKLYEEVLAPNIKQGACLLFAHGLNVHYSLITPRSDLDVVLVAPKGPGALVRREYEIGRGVPCIYAVHQDLSSHAEQLALTYAGGLGGARANIIKTTFKEETETDLFGEQAVLCGGVSSLVQAGFETLVEAGYQPEIAYYEVLHELKLIVDLFYEGGITRMLEFVSETAQYGDYVSGPRVIDRSTKERMKAVLKDIQDGTFTKHWIAEYQAGLPNYKKYKQADLEHPIEKVGKQLRAKMVWLNSEKTNDTTHPMSSKVV</sequence>
<protein>
    <recommendedName>
        <fullName evidence="1">Ketol-acid reductoisomerase (NADP(+))</fullName>
        <shortName evidence="1">KARI</shortName>
        <ecNumber evidence="1">1.1.1.86</ecNumber>
    </recommendedName>
    <alternativeName>
        <fullName evidence="1">Acetohydroxy-acid isomeroreductase</fullName>
        <shortName evidence="1">AHIR</shortName>
    </alternativeName>
    <alternativeName>
        <fullName evidence="1">Alpha-keto-beta-hydroxylacyl reductoisomerase</fullName>
    </alternativeName>
    <alternativeName>
        <fullName evidence="1">Ketol-acid reductoisomerase type 1</fullName>
    </alternativeName>
    <alternativeName>
        <fullName evidence="1">Ketol-acid reductoisomerase type I</fullName>
    </alternativeName>
</protein>
<evidence type="ECO:0000255" key="1">
    <source>
        <dbReference type="HAMAP-Rule" id="MF_00435"/>
    </source>
</evidence>
<evidence type="ECO:0000255" key="2">
    <source>
        <dbReference type="PROSITE-ProRule" id="PRU01197"/>
    </source>
</evidence>
<evidence type="ECO:0000255" key="3">
    <source>
        <dbReference type="PROSITE-ProRule" id="PRU01198"/>
    </source>
</evidence>
<dbReference type="EC" id="1.1.1.86" evidence="1"/>
<dbReference type="EMBL" id="AE009442">
    <property type="protein sequence ID" value="AAO28903.1"/>
    <property type="molecule type" value="Genomic_DNA"/>
</dbReference>
<dbReference type="SMR" id="Q87CM2"/>
<dbReference type="KEGG" id="xft:PD_1043"/>
<dbReference type="HOGENOM" id="CLU_033821_0_1_6"/>
<dbReference type="UniPathway" id="UPA00047">
    <property type="reaction ID" value="UER00056"/>
</dbReference>
<dbReference type="UniPathway" id="UPA00049">
    <property type="reaction ID" value="UER00060"/>
</dbReference>
<dbReference type="Proteomes" id="UP000002516">
    <property type="component" value="Chromosome"/>
</dbReference>
<dbReference type="GO" id="GO:0005829">
    <property type="term" value="C:cytosol"/>
    <property type="evidence" value="ECO:0007669"/>
    <property type="project" value="TreeGrafter"/>
</dbReference>
<dbReference type="GO" id="GO:0004455">
    <property type="term" value="F:ketol-acid reductoisomerase activity"/>
    <property type="evidence" value="ECO:0007669"/>
    <property type="project" value="UniProtKB-UniRule"/>
</dbReference>
<dbReference type="GO" id="GO:0000287">
    <property type="term" value="F:magnesium ion binding"/>
    <property type="evidence" value="ECO:0007669"/>
    <property type="project" value="UniProtKB-UniRule"/>
</dbReference>
<dbReference type="GO" id="GO:0050661">
    <property type="term" value="F:NADP binding"/>
    <property type="evidence" value="ECO:0007669"/>
    <property type="project" value="InterPro"/>
</dbReference>
<dbReference type="GO" id="GO:0009097">
    <property type="term" value="P:isoleucine biosynthetic process"/>
    <property type="evidence" value="ECO:0007669"/>
    <property type="project" value="UniProtKB-UniRule"/>
</dbReference>
<dbReference type="GO" id="GO:0009099">
    <property type="term" value="P:L-valine biosynthetic process"/>
    <property type="evidence" value="ECO:0007669"/>
    <property type="project" value="UniProtKB-UniRule"/>
</dbReference>
<dbReference type="FunFam" id="3.40.50.720:FF:000023">
    <property type="entry name" value="Ketol-acid reductoisomerase (NADP(+))"/>
    <property type="match status" value="1"/>
</dbReference>
<dbReference type="Gene3D" id="6.10.240.10">
    <property type="match status" value="1"/>
</dbReference>
<dbReference type="Gene3D" id="3.40.50.720">
    <property type="entry name" value="NAD(P)-binding Rossmann-like Domain"/>
    <property type="match status" value="1"/>
</dbReference>
<dbReference type="HAMAP" id="MF_00435">
    <property type="entry name" value="IlvC"/>
    <property type="match status" value="1"/>
</dbReference>
<dbReference type="InterPro" id="IPR008927">
    <property type="entry name" value="6-PGluconate_DH-like_C_sf"/>
</dbReference>
<dbReference type="InterPro" id="IPR013023">
    <property type="entry name" value="KARI"/>
</dbReference>
<dbReference type="InterPro" id="IPR000506">
    <property type="entry name" value="KARI_C"/>
</dbReference>
<dbReference type="InterPro" id="IPR013116">
    <property type="entry name" value="KARI_N"/>
</dbReference>
<dbReference type="InterPro" id="IPR014359">
    <property type="entry name" value="KARI_prok"/>
</dbReference>
<dbReference type="InterPro" id="IPR036291">
    <property type="entry name" value="NAD(P)-bd_dom_sf"/>
</dbReference>
<dbReference type="NCBIfam" id="TIGR00465">
    <property type="entry name" value="ilvC"/>
    <property type="match status" value="1"/>
</dbReference>
<dbReference type="NCBIfam" id="NF004017">
    <property type="entry name" value="PRK05479.1"/>
    <property type="match status" value="1"/>
</dbReference>
<dbReference type="PANTHER" id="PTHR21371">
    <property type="entry name" value="KETOL-ACID REDUCTOISOMERASE, MITOCHONDRIAL"/>
    <property type="match status" value="1"/>
</dbReference>
<dbReference type="PANTHER" id="PTHR21371:SF1">
    <property type="entry name" value="KETOL-ACID REDUCTOISOMERASE, MITOCHONDRIAL"/>
    <property type="match status" value="1"/>
</dbReference>
<dbReference type="Pfam" id="PF01450">
    <property type="entry name" value="KARI_C"/>
    <property type="match status" value="1"/>
</dbReference>
<dbReference type="Pfam" id="PF07991">
    <property type="entry name" value="KARI_N"/>
    <property type="match status" value="1"/>
</dbReference>
<dbReference type="PIRSF" id="PIRSF000116">
    <property type="entry name" value="IlvC_gammaproteo"/>
    <property type="match status" value="1"/>
</dbReference>
<dbReference type="SUPFAM" id="SSF48179">
    <property type="entry name" value="6-phosphogluconate dehydrogenase C-terminal domain-like"/>
    <property type="match status" value="1"/>
</dbReference>
<dbReference type="SUPFAM" id="SSF51735">
    <property type="entry name" value="NAD(P)-binding Rossmann-fold domains"/>
    <property type="match status" value="1"/>
</dbReference>
<dbReference type="PROSITE" id="PS51851">
    <property type="entry name" value="KARI_C"/>
    <property type="match status" value="1"/>
</dbReference>
<dbReference type="PROSITE" id="PS51850">
    <property type="entry name" value="KARI_N"/>
    <property type="match status" value="1"/>
</dbReference>
<proteinExistence type="inferred from homology"/>
<comment type="function">
    <text evidence="1">Involved in the biosynthesis of branched-chain amino acids (BCAA). Catalyzes an alkyl-migration followed by a ketol-acid reduction of (S)-2-acetolactate (S2AL) to yield (R)-2,3-dihydroxy-isovalerate. In the isomerase reaction, S2AL is rearranged via a Mg-dependent methyl migration to produce 3-hydroxy-3-methyl-2-ketobutyrate (HMKB). In the reductase reaction, this 2-ketoacid undergoes a metal-dependent reduction by NADPH to yield (R)-2,3-dihydroxy-isovalerate.</text>
</comment>
<comment type="catalytic activity">
    <reaction evidence="1">
        <text>(2R)-2,3-dihydroxy-3-methylbutanoate + NADP(+) = (2S)-2-acetolactate + NADPH + H(+)</text>
        <dbReference type="Rhea" id="RHEA:22068"/>
        <dbReference type="ChEBI" id="CHEBI:15378"/>
        <dbReference type="ChEBI" id="CHEBI:49072"/>
        <dbReference type="ChEBI" id="CHEBI:57783"/>
        <dbReference type="ChEBI" id="CHEBI:58349"/>
        <dbReference type="ChEBI" id="CHEBI:58476"/>
        <dbReference type="EC" id="1.1.1.86"/>
    </reaction>
</comment>
<comment type="catalytic activity">
    <reaction evidence="1">
        <text>(2R,3R)-2,3-dihydroxy-3-methylpentanoate + NADP(+) = (S)-2-ethyl-2-hydroxy-3-oxobutanoate + NADPH + H(+)</text>
        <dbReference type="Rhea" id="RHEA:13493"/>
        <dbReference type="ChEBI" id="CHEBI:15378"/>
        <dbReference type="ChEBI" id="CHEBI:49256"/>
        <dbReference type="ChEBI" id="CHEBI:49258"/>
        <dbReference type="ChEBI" id="CHEBI:57783"/>
        <dbReference type="ChEBI" id="CHEBI:58349"/>
        <dbReference type="EC" id="1.1.1.86"/>
    </reaction>
</comment>
<comment type="cofactor">
    <cofactor evidence="1">
        <name>Mg(2+)</name>
        <dbReference type="ChEBI" id="CHEBI:18420"/>
    </cofactor>
    <text evidence="1">Binds 2 magnesium ions per subunit.</text>
</comment>
<comment type="pathway">
    <text evidence="1">Amino-acid biosynthesis; L-isoleucine biosynthesis; L-isoleucine from 2-oxobutanoate: step 2/4.</text>
</comment>
<comment type="pathway">
    <text evidence="1">Amino-acid biosynthesis; L-valine biosynthesis; L-valine from pyruvate: step 2/4.</text>
</comment>
<comment type="similarity">
    <text evidence="1">Belongs to the ketol-acid reductoisomerase family.</text>
</comment>
<accession>Q87CM2</accession>